<accession>Q0I9N0</accession>
<name>TRPD_SYNS3</name>
<keyword id="KW-0028">Amino-acid biosynthesis</keyword>
<keyword id="KW-0057">Aromatic amino acid biosynthesis</keyword>
<keyword id="KW-0328">Glycosyltransferase</keyword>
<keyword id="KW-0460">Magnesium</keyword>
<keyword id="KW-0479">Metal-binding</keyword>
<keyword id="KW-1185">Reference proteome</keyword>
<keyword id="KW-0808">Transferase</keyword>
<keyword id="KW-0822">Tryptophan biosynthesis</keyword>
<protein>
    <recommendedName>
        <fullName evidence="1">Anthranilate phosphoribosyltransferase</fullName>
        <ecNumber evidence="1">2.4.2.18</ecNumber>
    </recommendedName>
</protein>
<gene>
    <name evidence="1" type="primary">trpD</name>
    <name type="ordered locus">sync_1637</name>
</gene>
<comment type="function">
    <text evidence="1">Catalyzes the transfer of the phosphoribosyl group of 5-phosphorylribose-1-pyrophosphate (PRPP) to anthranilate to yield N-(5'-phosphoribosyl)-anthranilate (PRA).</text>
</comment>
<comment type="catalytic activity">
    <reaction evidence="1">
        <text>N-(5-phospho-beta-D-ribosyl)anthranilate + diphosphate = 5-phospho-alpha-D-ribose 1-diphosphate + anthranilate</text>
        <dbReference type="Rhea" id="RHEA:11768"/>
        <dbReference type="ChEBI" id="CHEBI:16567"/>
        <dbReference type="ChEBI" id="CHEBI:18277"/>
        <dbReference type="ChEBI" id="CHEBI:33019"/>
        <dbReference type="ChEBI" id="CHEBI:58017"/>
        <dbReference type="EC" id="2.4.2.18"/>
    </reaction>
</comment>
<comment type="cofactor">
    <cofactor evidence="1">
        <name>Mg(2+)</name>
        <dbReference type="ChEBI" id="CHEBI:18420"/>
    </cofactor>
    <text evidence="1">Binds 2 magnesium ions per monomer.</text>
</comment>
<comment type="pathway">
    <text evidence="1">Amino-acid biosynthesis; L-tryptophan biosynthesis; L-tryptophan from chorismate: step 2/5.</text>
</comment>
<comment type="subunit">
    <text evidence="1">Homodimer.</text>
</comment>
<comment type="similarity">
    <text evidence="1">Belongs to the anthranilate phosphoribosyltransferase family.</text>
</comment>
<feature type="chain" id="PRO_0000325468" description="Anthranilate phosphoribosyltransferase">
    <location>
        <begin position="1"/>
        <end position="348"/>
    </location>
</feature>
<feature type="binding site" evidence="1">
    <location>
        <position position="87"/>
    </location>
    <ligand>
        <name>5-phospho-alpha-D-ribose 1-diphosphate</name>
        <dbReference type="ChEBI" id="CHEBI:58017"/>
    </ligand>
</feature>
<feature type="binding site" evidence="1">
    <location>
        <position position="87"/>
    </location>
    <ligand>
        <name>anthranilate</name>
        <dbReference type="ChEBI" id="CHEBI:16567"/>
        <label>1</label>
    </ligand>
</feature>
<feature type="binding site" evidence="1">
    <location>
        <begin position="90"/>
        <end position="91"/>
    </location>
    <ligand>
        <name>5-phospho-alpha-D-ribose 1-diphosphate</name>
        <dbReference type="ChEBI" id="CHEBI:58017"/>
    </ligand>
</feature>
<feature type="binding site" evidence="1">
    <location>
        <position position="95"/>
    </location>
    <ligand>
        <name>5-phospho-alpha-D-ribose 1-diphosphate</name>
        <dbReference type="ChEBI" id="CHEBI:58017"/>
    </ligand>
</feature>
<feature type="binding site" evidence="1">
    <location>
        <begin position="97"/>
        <end position="100"/>
    </location>
    <ligand>
        <name>5-phospho-alpha-D-ribose 1-diphosphate</name>
        <dbReference type="ChEBI" id="CHEBI:58017"/>
    </ligand>
</feature>
<feature type="binding site" evidence="1">
    <location>
        <position position="99"/>
    </location>
    <ligand>
        <name>Mg(2+)</name>
        <dbReference type="ChEBI" id="CHEBI:18420"/>
        <label>1</label>
    </ligand>
</feature>
<feature type="binding site" evidence="1">
    <location>
        <begin position="115"/>
        <end position="123"/>
    </location>
    <ligand>
        <name>5-phospho-alpha-D-ribose 1-diphosphate</name>
        <dbReference type="ChEBI" id="CHEBI:58017"/>
    </ligand>
</feature>
<feature type="binding site" evidence="1">
    <location>
        <position position="118"/>
    </location>
    <ligand>
        <name>anthranilate</name>
        <dbReference type="ChEBI" id="CHEBI:16567"/>
        <label>1</label>
    </ligand>
</feature>
<feature type="binding site" evidence="1">
    <location>
        <position position="127"/>
    </location>
    <ligand>
        <name>5-phospho-alpha-D-ribose 1-diphosphate</name>
        <dbReference type="ChEBI" id="CHEBI:58017"/>
    </ligand>
</feature>
<feature type="binding site" evidence="1">
    <location>
        <position position="173"/>
    </location>
    <ligand>
        <name>anthranilate</name>
        <dbReference type="ChEBI" id="CHEBI:16567"/>
        <label>2</label>
    </ligand>
</feature>
<feature type="binding site" evidence="1">
    <location>
        <position position="232"/>
    </location>
    <ligand>
        <name>Mg(2+)</name>
        <dbReference type="ChEBI" id="CHEBI:18420"/>
        <label>2</label>
    </ligand>
</feature>
<feature type="binding site" evidence="1">
    <location>
        <position position="233"/>
    </location>
    <ligand>
        <name>Mg(2+)</name>
        <dbReference type="ChEBI" id="CHEBI:18420"/>
        <label>1</label>
    </ligand>
</feature>
<feature type="binding site" evidence="1">
    <location>
        <position position="233"/>
    </location>
    <ligand>
        <name>Mg(2+)</name>
        <dbReference type="ChEBI" id="CHEBI:18420"/>
        <label>2</label>
    </ligand>
</feature>
<sequence>MVTASESWPQLLEQLLVGNVLSKENAAALMEAWLAEELTPVQTGAFLAAFRARDVQGSELAAMAEVLRKACALPDAKPNLGLVDTCGTGGDGADTFNISTAVAFTAAACGAHVAKHGNRSASGKVGSADVLEGLGLHLKAPLESVLGALPASGVTFLFAPAWHPALVNLAPLRRSLGVRTVFNLLGPLVNPLTPEAQVLGVAKAELLDPMAEALQQLGLTRAVVVHGAGGLDEASLEGPNEVRILENGNVRSDQLSASDFGLTLAPLEALRGGDLVTNQQILEAVLKGEAPDAHRDAVALNTALVLWAAGVQSDLSEGVKQALTSLEEGQPWHRLVSLRDALEGRKEE</sequence>
<evidence type="ECO:0000255" key="1">
    <source>
        <dbReference type="HAMAP-Rule" id="MF_00211"/>
    </source>
</evidence>
<dbReference type="EC" id="2.4.2.18" evidence="1"/>
<dbReference type="EMBL" id="CP000435">
    <property type="protein sequence ID" value="ABI47416.1"/>
    <property type="molecule type" value="Genomic_DNA"/>
</dbReference>
<dbReference type="RefSeq" id="WP_011619557.1">
    <property type="nucleotide sequence ID" value="NC_008319.1"/>
</dbReference>
<dbReference type="SMR" id="Q0I9N0"/>
<dbReference type="STRING" id="64471.sync_1637"/>
<dbReference type="KEGG" id="syg:sync_1637"/>
<dbReference type="eggNOG" id="COG0547">
    <property type="taxonomic scope" value="Bacteria"/>
</dbReference>
<dbReference type="HOGENOM" id="CLU_034315_2_1_3"/>
<dbReference type="OrthoDB" id="9806430at2"/>
<dbReference type="UniPathway" id="UPA00035">
    <property type="reaction ID" value="UER00041"/>
</dbReference>
<dbReference type="Proteomes" id="UP000001961">
    <property type="component" value="Chromosome"/>
</dbReference>
<dbReference type="GO" id="GO:0005829">
    <property type="term" value="C:cytosol"/>
    <property type="evidence" value="ECO:0007669"/>
    <property type="project" value="TreeGrafter"/>
</dbReference>
<dbReference type="GO" id="GO:0004048">
    <property type="term" value="F:anthranilate phosphoribosyltransferase activity"/>
    <property type="evidence" value="ECO:0007669"/>
    <property type="project" value="UniProtKB-UniRule"/>
</dbReference>
<dbReference type="GO" id="GO:0000287">
    <property type="term" value="F:magnesium ion binding"/>
    <property type="evidence" value="ECO:0007669"/>
    <property type="project" value="UniProtKB-UniRule"/>
</dbReference>
<dbReference type="GO" id="GO:0000162">
    <property type="term" value="P:L-tryptophan biosynthetic process"/>
    <property type="evidence" value="ECO:0007669"/>
    <property type="project" value="UniProtKB-UniRule"/>
</dbReference>
<dbReference type="FunFam" id="3.40.1030.10:FF:000002">
    <property type="entry name" value="Anthranilate phosphoribosyltransferase"/>
    <property type="match status" value="1"/>
</dbReference>
<dbReference type="Gene3D" id="3.40.1030.10">
    <property type="entry name" value="Nucleoside phosphorylase/phosphoribosyltransferase catalytic domain"/>
    <property type="match status" value="1"/>
</dbReference>
<dbReference type="Gene3D" id="1.20.970.10">
    <property type="entry name" value="Transferase, Pyrimidine Nucleoside Phosphorylase, Chain C"/>
    <property type="match status" value="1"/>
</dbReference>
<dbReference type="HAMAP" id="MF_00211">
    <property type="entry name" value="TrpD"/>
    <property type="match status" value="1"/>
</dbReference>
<dbReference type="InterPro" id="IPR005940">
    <property type="entry name" value="Anthranilate_Pribosyl_Tfrase"/>
</dbReference>
<dbReference type="InterPro" id="IPR000312">
    <property type="entry name" value="Glycosyl_Trfase_fam3"/>
</dbReference>
<dbReference type="InterPro" id="IPR017459">
    <property type="entry name" value="Glycosyl_Trfase_fam3_N_dom"/>
</dbReference>
<dbReference type="InterPro" id="IPR036320">
    <property type="entry name" value="Glycosyl_Trfase_fam3_N_dom_sf"/>
</dbReference>
<dbReference type="InterPro" id="IPR035902">
    <property type="entry name" value="Nuc_phospho_transferase"/>
</dbReference>
<dbReference type="NCBIfam" id="TIGR01245">
    <property type="entry name" value="trpD"/>
    <property type="match status" value="1"/>
</dbReference>
<dbReference type="PANTHER" id="PTHR43285">
    <property type="entry name" value="ANTHRANILATE PHOSPHORIBOSYLTRANSFERASE"/>
    <property type="match status" value="1"/>
</dbReference>
<dbReference type="PANTHER" id="PTHR43285:SF2">
    <property type="entry name" value="ANTHRANILATE PHOSPHORIBOSYLTRANSFERASE"/>
    <property type="match status" value="1"/>
</dbReference>
<dbReference type="Pfam" id="PF02885">
    <property type="entry name" value="Glycos_trans_3N"/>
    <property type="match status" value="1"/>
</dbReference>
<dbReference type="Pfam" id="PF00591">
    <property type="entry name" value="Glycos_transf_3"/>
    <property type="match status" value="1"/>
</dbReference>
<dbReference type="SUPFAM" id="SSF52418">
    <property type="entry name" value="Nucleoside phosphorylase/phosphoribosyltransferase catalytic domain"/>
    <property type="match status" value="1"/>
</dbReference>
<dbReference type="SUPFAM" id="SSF47648">
    <property type="entry name" value="Nucleoside phosphorylase/phosphoribosyltransferase N-terminal domain"/>
    <property type="match status" value="1"/>
</dbReference>
<proteinExistence type="inferred from homology"/>
<reference key="1">
    <citation type="journal article" date="2006" name="Proc. Natl. Acad. Sci. U.S.A.">
        <title>Genome sequence of Synechococcus CC9311: insights into adaptation to a coastal environment.</title>
        <authorList>
            <person name="Palenik B."/>
            <person name="Ren Q."/>
            <person name="Dupont C.L."/>
            <person name="Myers G.S."/>
            <person name="Heidelberg J.F."/>
            <person name="Badger J.H."/>
            <person name="Madupu R."/>
            <person name="Nelson W.C."/>
            <person name="Brinkac L.M."/>
            <person name="Dodson R.J."/>
            <person name="Durkin A.S."/>
            <person name="Daugherty S.C."/>
            <person name="Sullivan S.A."/>
            <person name="Khouri H."/>
            <person name="Mohamoud Y."/>
            <person name="Halpin R."/>
            <person name="Paulsen I.T."/>
        </authorList>
    </citation>
    <scope>NUCLEOTIDE SEQUENCE [LARGE SCALE GENOMIC DNA]</scope>
    <source>
        <strain>CC9311</strain>
    </source>
</reference>
<organism>
    <name type="scientific">Synechococcus sp. (strain CC9311)</name>
    <dbReference type="NCBI Taxonomy" id="64471"/>
    <lineage>
        <taxon>Bacteria</taxon>
        <taxon>Bacillati</taxon>
        <taxon>Cyanobacteriota</taxon>
        <taxon>Cyanophyceae</taxon>
        <taxon>Synechococcales</taxon>
        <taxon>Synechococcaceae</taxon>
        <taxon>Synechococcus</taxon>
    </lineage>
</organism>